<evidence type="ECO:0000250" key="1"/>
<evidence type="ECO:0000255" key="2"/>
<evidence type="ECO:0000269" key="3">
    <source>
    </source>
</evidence>
<evidence type="ECO:0000305" key="4"/>
<gene>
    <name type="primary">PEX11-5</name>
    <name type="ordered locus">Os06g0127000</name>
    <name type="ordered locus">LOC_Os06g03660</name>
    <name type="ORF">OSJNBa0038F22.10-1</name>
    <name type="ORF">P0425F02.44-1</name>
</gene>
<name>PX115_ORYSJ</name>
<accession>Q5VRJ8</accession>
<accession>Q0DEZ9</accession>
<proteinExistence type="evidence at transcript level"/>
<comment type="function">
    <text evidence="1">Involved in peroxisomal proliferation.</text>
</comment>
<comment type="subcellular location">
    <subcellularLocation>
        <location evidence="1">Peroxisome membrane</location>
        <topology evidence="1">Multi-pass membrane protein</topology>
    </subcellularLocation>
</comment>
<comment type="tissue specificity">
    <text evidence="3">Expressed in seedlings, roots, shoots, leaf sheaths, flag leaf, panicles, spikelets, and endosperm.</text>
</comment>
<comment type="developmental stage">
    <text>Expressed in endosperm 21 days after pollination.</text>
</comment>
<comment type="induction">
    <text>By abscisic acid, H(2)O(2) and salt stress. Down-regulated by nitrogen or phosphorous deprivation.</text>
</comment>
<comment type="similarity">
    <text evidence="4">Belongs to the peroxin-11 family.</text>
</comment>
<organism>
    <name type="scientific">Oryza sativa subsp. japonica</name>
    <name type="common">Rice</name>
    <dbReference type="NCBI Taxonomy" id="39947"/>
    <lineage>
        <taxon>Eukaryota</taxon>
        <taxon>Viridiplantae</taxon>
        <taxon>Streptophyta</taxon>
        <taxon>Embryophyta</taxon>
        <taxon>Tracheophyta</taxon>
        <taxon>Spermatophyta</taxon>
        <taxon>Magnoliopsida</taxon>
        <taxon>Liliopsida</taxon>
        <taxon>Poales</taxon>
        <taxon>Poaceae</taxon>
        <taxon>BOP clade</taxon>
        <taxon>Oryzoideae</taxon>
        <taxon>Oryzeae</taxon>
        <taxon>Oryzinae</taxon>
        <taxon>Oryza</taxon>
        <taxon>Oryza sativa</taxon>
    </lineage>
</organism>
<dbReference type="EMBL" id="AP001168">
    <property type="protein sequence ID" value="BAD67743.1"/>
    <property type="molecule type" value="Genomic_DNA"/>
</dbReference>
<dbReference type="EMBL" id="AP002838">
    <property type="protein sequence ID" value="BAD67925.1"/>
    <property type="molecule type" value="Genomic_DNA"/>
</dbReference>
<dbReference type="EMBL" id="AP008212">
    <property type="protein sequence ID" value="BAF18574.2"/>
    <property type="molecule type" value="Genomic_DNA"/>
</dbReference>
<dbReference type="EMBL" id="AP014962">
    <property type="protein sequence ID" value="BAS95930.1"/>
    <property type="molecule type" value="Genomic_DNA"/>
</dbReference>
<dbReference type="EMBL" id="AK061048">
    <property type="status" value="NOT_ANNOTATED_CDS"/>
    <property type="molecule type" value="mRNA"/>
</dbReference>
<dbReference type="RefSeq" id="XP_015640928.1">
    <property type="nucleotide sequence ID" value="XM_015785442.1"/>
</dbReference>
<dbReference type="FunCoup" id="Q5VRJ8">
    <property type="interactions" value="91"/>
</dbReference>
<dbReference type="STRING" id="39947.Q5VRJ8"/>
<dbReference type="PaxDb" id="39947-Q5VRJ8"/>
<dbReference type="EnsemblPlants" id="Os06t0127000-01">
    <property type="protein sequence ID" value="Os06t0127000-01"/>
    <property type="gene ID" value="Os06g0127000"/>
</dbReference>
<dbReference type="EnsemblPlants" id="Os06t0127000-02">
    <property type="protein sequence ID" value="Os06t0127000-02"/>
    <property type="gene ID" value="Os06g0127000"/>
</dbReference>
<dbReference type="EnsemblPlants" id="Os06t0127000-03">
    <property type="protein sequence ID" value="Os06t0127000-03"/>
    <property type="gene ID" value="Os06g0127000"/>
</dbReference>
<dbReference type="Gramene" id="Os06t0127000-01">
    <property type="protein sequence ID" value="Os06t0127000-01"/>
    <property type="gene ID" value="Os06g0127000"/>
</dbReference>
<dbReference type="Gramene" id="Os06t0127000-02">
    <property type="protein sequence ID" value="Os06t0127000-02"/>
    <property type="gene ID" value="Os06g0127000"/>
</dbReference>
<dbReference type="Gramene" id="Os06t0127000-03">
    <property type="protein sequence ID" value="Os06t0127000-03"/>
    <property type="gene ID" value="Os06g0127000"/>
</dbReference>
<dbReference type="KEGG" id="dosa:Os06g0127000"/>
<dbReference type="eggNOG" id="KOG4186">
    <property type="taxonomic scope" value="Eukaryota"/>
</dbReference>
<dbReference type="HOGENOM" id="CLU_075417_0_0_1"/>
<dbReference type="InParanoid" id="Q5VRJ8"/>
<dbReference type="OMA" id="ASAMNCY"/>
<dbReference type="OrthoDB" id="411017at2759"/>
<dbReference type="Proteomes" id="UP000000763">
    <property type="component" value="Chromosome 6"/>
</dbReference>
<dbReference type="Proteomes" id="UP000059680">
    <property type="component" value="Chromosome 6"/>
</dbReference>
<dbReference type="ExpressionAtlas" id="Q5VRJ8">
    <property type="expression patterns" value="baseline and differential"/>
</dbReference>
<dbReference type="GO" id="GO:0005778">
    <property type="term" value="C:peroxisomal membrane"/>
    <property type="evidence" value="ECO:0000318"/>
    <property type="project" value="GO_Central"/>
</dbReference>
<dbReference type="GO" id="GO:0042802">
    <property type="term" value="F:identical protein binding"/>
    <property type="evidence" value="ECO:0007669"/>
    <property type="project" value="UniProtKB-ARBA"/>
</dbReference>
<dbReference type="GO" id="GO:0016559">
    <property type="term" value="P:peroxisome fission"/>
    <property type="evidence" value="ECO:0000318"/>
    <property type="project" value="GO_Central"/>
</dbReference>
<dbReference type="GO" id="GO:0044375">
    <property type="term" value="P:regulation of peroxisome size"/>
    <property type="evidence" value="ECO:0007669"/>
    <property type="project" value="UniProtKB-ARBA"/>
</dbReference>
<dbReference type="InterPro" id="IPR008733">
    <property type="entry name" value="PEX11"/>
</dbReference>
<dbReference type="PANTHER" id="PTHR12652">
    <property type="entry name" value="PEROXISOMAL BIOGENESIS FACTOR 11"/>
    <property type="match status" value="1"/>
</dbReference>
<dbReference type="PANTHER" id="PTHR12652:SF10">
    <property type="entry name" value="PEROXISOMAL MEMBRANE PROTEIN 11C-RELATED"/>
    <property type="match status" value="1"/>
</dbReference>
<dbReference type="Pfam" id="PF05648">
    <property type="entry name" value="PEX11"/>
    <property type="match status" value="1"/>
</dbReference>
<reference key="1">
    <citation type="journal article" date="2005" name="Nature">
        <title>The map-based sequence of the rice genome.</title>
        <authorList>
            <consortium name="International rice genome sequencing project (IRGSP)"/>
        </authorList>
    </citation>
    <scope>NUCLEOTIDE SEQUENCE [LARGE SCALE GENOMIC DNA]</scope>
    <source>
        <strain>cv. Nipponbare</strain>
    </source>
</reference>
<reference key="2">
    <citation type="journal article" date="2008" name="Nucleic Acids Res.">
        <title>The rice annotation project database (RAP-DB): 2008 update.</title>
        <authorList>
            <consortium name="The rice annotation project (RAP)"/>
        </authorList>
    </citation>
    <scope>GENOME REANNOTATION</scope>
    <source>
        <strain>cv. Nipponbare</strain>
    </source>
</reference>
<reference key="3">
    <citation type="journal article" date="2013" name="Rice">
        <title>Improvement of the Oryza sativa Nipponbare reference genome using next generation sequence and optical map data.</title>
        <authorList>
            <person name="Kawahara Y."/>
            <person name="de la Bastide M."/>
            <person name="Hamilton J.P."/>
            <person name="Kanamori H."/>
            <person name="McCombie W.R."/>
            <person name="Ouyang S."/>
            <person name="Schwartz D.C."/>
            <person name="Tanaka T."/>
            <person name="Wu J."/>
            <person name="Zhou S."/>
            <person name="Childs K.L."/>
            <person name="Davidson R.M."/>
            <person name="Lin H."/>
            <person name="Quesada-Ocampo L."/>
            <person name="Vaillancourt B."/>
            <person name="Sakai H."/>
            <person name="Lee S.S."/>
            <person name="Kim J."/>
            <person name="Numa H."/>
            <person name="Itoh T."/>
            <person name="Buell C.R."/>
            <person name="Matsumoto T."/>
        </authorList>
    </citation>
    <scope>GENOME REANNOTATION</scope>
    <source>
        <strain>cv. Nipponbare</strain>
    </source>
</reference>
<reference key="4">
    <citation type="journal article" date="2003" name="Science">
        <title>Collection, mapping, and annotation of over 28,000 cDNA clones from japonica rice.</title>
        <authorList>
            <consortium name="The rice full-length cDNA consortium"/>
        </authorList>
    </citation>
    <scope>NUCLEOTIDE SEQUENCE [LARGE SCALE MRNA]</scope>
    <source>
        <strain>cv. Nipponbare</strain>
    </source>
</reference>
<reference key="5">
    <citation type="journal article" date="2008" name="Gene">
        <title>Comprehensive sequence and expression profile analysis of PEX11 gene family in rice.</title>
        <authorList>
            <person name="Nayidu N.K."/>
            <person name="Wang L."/>
            <person name="Xie W."/>
            <person name="Zhang C."/>
            <person name="Fan C."/>
            <person name="Lian X."/>
            <person name="Zhang Q."/>
            <person name="Xiong L."/>
        </authorList>
    </citation>
    <scope>TISSUE SPECIFICITY</scope>
    <scope>GENE FAMILY</scope>
    <scope>NOMENCLATURE</scope>
</reference>
<keyword id="KW-0472">Membrane</keyword>
<keyword id="KW-0576">Peroxisome</keyword>
<keyword id="KW-0962">Peroxisome biogenesis</keyword>
<keyword id="KW-1185">Reference proteome</keyword>
<keyword id="KW-0812">Transmembrane</keyword>
<keyword id="KW-1133">Transmembrane helix</keyword>
<protein>
    <recommendedName>
        <fullName>Peroxisomal membrane protein 11-5</fullName>
    </recommendedName>
    <alternativeName>
        <fullName>OsPEX11-2</fullName>
    </alternativeName>
    <alternativeName>
        <fullName>OsPEX11-5</fullName>
    </alternativeName>
    <alternativeName>
        <fullName>Peroxin-11-5</fullName>
    </alternativeName>
</protein>
<feature type="chain" id="PRO_0000330306" description="Peroxisomal membrane protein 11-5">
    <location>
        <begin position="1"/>
        <end position="233"/>
    </location>
</feature>
<feature type="topological domain" description="Cytoplasmic" evidence="2">
    <location>
        <begin position="1"/>
        <end position="92"/>
    </location>
</feature>
<feature type="transmembrane region" description="Helical" evidence="2">
    <location>
        <begin position="93"/>
        <end position="113"/>
    </location>
</feature>
<feature type="topological domain" description="Lumenal" evidence="2">
    <location>
        <begin position="114"/>
        <end position="206"/>
    </location>
</feature>
<feature type="transmembrane region" description="Helical" evidence="2">
    <location>
        <begin position="207"/>
        <end position="226"/>
    </location>
</feature>
<sequence length="233" mass="25889">MSSLESARADLALLILYLNKAEARDKICRAIQYGSKFVSNGQPGPAQNVDKSTSLARKVFRLFKFVNDLHALISPPAKGTPLPLILLGKSKNALLSTFLFLDQIVWAGRTGIYKNKERAEFLSKIAFYCFLGSNTCTSIIEVAELQRLSKSMKKLEKELKHQELLKNEQYQMKLQKCNERRLALIKSSLDIVVAIGLLQLAPKKVTPRVTGAFGFASSLIACYQLLPAPAKSK</sequence>